<name>RF1ML_HUMAN</name>
<dbReference type="EMBL" id="AK027684">
    <property type="protein sequence ID" value="BAB55295.1"/>
    <property type="molecule type" value="mRNA"/>
</dbReference>
<dbReference type="EMBL" id="AK095240">
    <property type="protein sequence ID" value="BAG53012.1"/>
    <property type="molecule type" value="mRNA"/>
</dbReference>
<dbReference type="EMBL" id="AK290662">
    <property type="protein sequence ID" value="BAF83351.1"/>
    <property type="molecule type" value="mRNA"/>
</dbReference>
<dbReference type="EMBL" id="AL080276">
    <property type="status" value="NOT_ANNOTATED_CDS"/>
    <property type="molecule type" value="Genomic_DNA"/>
</dbReference>
<dbReference type="EMBL" id="CH471051">
    <property type="protein sequence ID" value="EAW47712.1"/>
    <property type="molecule type" value="Genomic_DNA"/>
</dbReference>
<dbReference type="EMBL" id="BC011873">
    <property type="protein sequence ID" value="AAH11873.1"/>
    <property type="molecule type" value="mRNA"/>
</dbReference>
<dbReference type="EMBL" id="BC014428">
    <property type="protein sequence ID" value="AAH14428.1"/>
    <property type="molecule type" value="mRNA"/>
</dbReference>
<dbReference type="EMBL" id="BC105973">
    <property type="protein sequence ID" value="AAI05974.1"/>
    <property type="molecule type" value="mRNA"/>
</dbReference>
<dbReference type="CCDS" id="CCDS47502.1">
    <molecule id="Q9UGC7-2"/>
</dbReference>
<dbReference type="CCDS" id="CCDS5243.1">
    <molecule id="Q9UGC7-1"/>
</dbReference>
<dbReference type="CCDS" id="CCDS75540.1">
    <molecule id="Q9UGC7-4"/>
</dbReference>
<dbReference type="RefSeq" id="NP_001107656.1">
    <molecule id="Q9UGC7-2"/>
    <property type="nucleotide sequence ID" value="NM_001114184.3"/>
</dbReference>
<dbReference type="RefSeq" id="NP_001287976.1">
    <molecule id="Q9UGC7-4"/>
    <property type="nucleotide sequence ID" value="NM_001301047.3"/>
</dbReference>
<dbReference type="RefSeq" id="NP_001288799.1">
    <property type="nucleotide sequence ID" value="NM_001301870.1"/>
</dbReference>
<dbReference type="RefSeq" id="NP_001288800.1">
    <molecule id="Q9UGC7-3"/>
    <property type="nucleotide sequence ID" value="NM_001301871.2"/>
</dbReference>
<dbReference type="RefSeq" id="NP_061914.3">
    <molecule id="Q9UGC7-1"/>
    <property type="nucleotide sequence ID" value="NM_019041.6"/>
</dbReference>
<dbReference type="RefSeq" id="XP_016866448.1">
    <property type="nucleotide sequence ID" value="XM_017010959.1"/>
</dbReference>
<dbReference type="RefSeq" id="XP_016866449.1">
    <property type="nucleotide sequence ID" value="XM_017010960.1"/>
</dbReference>
<dbReference type="RefSeq" id="XP_047274862.1">
    <molecule id="Q9UGC7-3"/>
    <property type="nucleotide sequence ID" value="XM_047418906.1"/>
</dbReference>
<dbReference type="RefSeq" id="XP_047274863.1">
    <molecule id="Q9UGC7-3"/>
    <property type="nucleotide sequence ID" value="XM_047418907.1"/>
</dbReference>
<dbReference type="RefSeq" id="XP_054211658.1">
    <molecule id="Q9UGC7-3"/>
    <property type="nucleotide sequence ID" value="XM_054355683.1"/>
</dbReference>
<dbReference type="RefSeq" id="XP_054211659.1">
    <molecule id="Q9UGC7-3"/>
    <property type="nucleotide sequence ID" value="XM_054355684.1"/>
</dbReference>
<dbReference type="PDB" id="7NQH">
    <property type="method" value="EM"/>
    <property type="resolution" value="3.50 A"/>
    <property type="chains" value="BL=20-380"/>
</dbReference>
<dbReference type="PDBsum" id="7NQH"/>
<dbReference type="EMDB" id="EMD-12527"/>
<dbReference type="SMR" id="Q9UGC7"/>
<dbReference type="BioGRID" id="120010">
    <property type="interactions" value="242"/>
</dbReference>
<dbReference type="FunCoup" id="Q9UGC7">
    <property type="interactions" value="2421"/>
</dbReference>
<dbReference type="IntAct" id="Q9UGC7">
    <property type="interactions" value="9"/>
</dbReference>
<dbReference type="STRING" id="9606.ENSP00000356202"/>
<dbReference type="iPTMnet" id="Q9UGC7"/>
<dbReference type="PhosphoSitePlus" id="Q9UGC7"/>
<dbReference type="BioMuta" id="MTRF1L"/>
<dbReference type="DMDM" id="74753314"/>
<dbReference type="jPOST" id="Q9UGC7"/>
<dbReference type="MassIVE" id="Q9UGC7"/>
<dbReference type="PaxDb" id="9606-ENSP00000356202"/>
<dbReference type="PeptideAtlas" id="Q9UGC7"/>
<dbReference type="ProteomicsDB" id="84207">
    <molecule id="Q9UGC7-1"/>
</dbReference>
<dbReference type="ProteomicsDB" id="84208">
    <molecule id="Q9UGC7-2"/>
</dbReference>
<dbReference type="ProteomicsDB" id="84209">
    <molecule id="Q9UGC7-3"/>
</dbReference>
<dbReference type="ProteomicsDB" id="84210">
    <molecule id="Q9UGC7-4"/>
</dbReference>
<dbReference type="Pumba" id="Q9UGC7"/>
<dbReference type="Antibodypedia" id="33386">
    <property type="antibodies" value="241 antibodies from 14 providers"/>
</dbReference>
<dbReference type="DNASU" id="54516"/>
<dbReference type="Ensembl" id="ENST00000367230.5">
    <molecule id="Q9UGC7-4"/>
    <property type="protein sequence ID" value="ENSP00000356199.1"/>
    <property type="gene ID" value="ENSG00000112031.16"/>
</dbReference>
<dbReference type="Ensembl" id="ENST00000367231.9">
    <molecule id="Q9UGC7-2"/>
    <property type="protein sequence ID" value="ENSP00000356200.5"/>
    <property type="gene ID" value="ENSG00000112031.16"/>
</dbReference>
<dbReference type="Ensembl" id="ENST00000367233.10">
    <molecule id="Q9UGC7-1"/>
    <property type="protein sequence ID" value="ENSP00000356202.5"/>
    <property type="gene ID" value="ENSG00000112031.16"/>
</dbReference>
<dbReference type="GeneID" id="54516"/>
<dbReference type="KEGG" id="hsa:54516"/>
<dbReference type="MANE-Select" id="ENST00000367233.10">
    <property type="protein sequence ID" value="ENSP00000356202.5"/>
    <property type="RefSeq nucleotide sequence ID" value="NM_019041.7"/>
    <property type="RefSeq protein sequence ID" value="NP_061914.3"/>
</dbReference>
<dbReference type="UCSC" id="uc003qpi.5">
    <molecule id="Q9UGC7-1"/>
    <property type="organism name" value="human"/>
</dbReference>
<dbReference type="AGR" id="HGNC:21051"/>
<dbReference type="CTD" id="54516"/>
<dbReference type="DisGeNET" id="54516"/>
<dbReference type="GeneCards" id="MTRF1L"/>
<dbReference type="HGNC" id="HGNC:21051">
    <property type="gene designation" value="MTRF1L"/>
</dbReference>
<dbReference type="HPA" id="ENSG00000112031">
    <property type="expression patterns" value="Low tissue specificity"/>
</dbReference>
<dbReference type="MIM" id="613542">
    <property type="type" value="gene"/>
</dbReference>
<dbReference type="neXtProt" id="NX_Q9UGC7"/>
<dbReference type="OpenTargets" id="ENSG00000112031"/>
<dbReference type="PharmGKB" id="PA134870441"/>
<dbReference type="VEuPathDB" id="HostDB:ENSG00000112031"/>
<dbReference type="eggNOG" id="KOG2726">
    <property type="taxonomic scope" value="Eukaryota"/>
</dbReference>
<dbReference type="GeneTree" id="ENSGT00940000155683"/>
<dbReference type="HOGENOM" id="CLU_036856_0_3_1"/>
<dbReference type="InParanoid" id="Q9UGC7"/>
<dbReference type="OMA" id="DHRVGFK"/>
<dbReference type="OrthoDB" id="2019491at2759"/>
<dbReference type="PAN-GO" id="Q9UGC7">
    <property type="GO annotations" value="2 GO annotations based on evolutionary models"/>
</dbReference>
<dbReference type="PhylomeDB" id="Q9UGC7"/>
<dbReference type="TreeFam" id="TF313720"/>
<dbReference type="PathwayCommons" id="Q9UGC7"/>
<dbReference type="Reactome" id="R-HSA-5419276">
    <property type="pathway name" value="Mitochondrial translation termination"/>
</dbReference>
<dbReference type="SignaLink" id="Q9UGC7"/>
<dbReference type="BioGRID-ORCS" id="54516">
    <property type="hits" value="200 hits in 1155 CRISPR screens"/>
</dbReference>
<dbReference type="ChiTaRS" id="MTRF1L">
    <property type="organism name" value="human"/>
</dbReference>
<dbReference type="GeneWiki" id="MTRF1L"/>
<dbReference type="GenomeRNAi" id="54516"/>
<dbReference type="Pharos" id="Q9UGC7">
    <property type="development level" value="Tbio"/>
</dbReference>
<dbReference type="PRO" id="PR:Q9UGC7"/>
<dbReference type="Proteomes" id="UP000005640">
    <property type="component" value="Chromosome 6"/>
</dbReference>
<dbReference type="RNAct" id="Q9UGC7">
    <property type="molecule type" value="protein"/>
</dbReference>
<dbReference type="Bgee" id="ENSG00000112031">
    <property type="expression patterns" value="Expressed in left ventricle myocardium and 195 other cell types or tissues"/>
</dbReference>
<dbReference type="ExpressionAtlas" id="Q9UGC7">
    <property type="expression patterns" value="baseline and differential"/>
</dbReference>
<dbReference type="GO" id="GO:0005759">
    <property type="term" value="C:mitochondrial matrix"/>
    <property type="evidence" value="ECO:0000304"/>
    <property type="project" value="FlyBase"/>
</dbReference>
<dbReference type="GO" id="GO:0005739">
    <property type="term" value="C:mitochondrion"/>
    <property type="evidence" value="ECO:0000314"/>
    <property type="project" value="UniProtKB"/>
</dbReference>
<dbReference type="GO" id="GO:0003747">
    <property type="term" value="F:translation release factor activity"/>
    <property type="evidence" value="ECO:0000314"/>
    <property type="project" value="UniProtKB"/>
</dbReference>
<dbReference type="GO" id="GO:0016149">
    <property type="term" value="F:translation release factor activity, codon specific"/>
    <property type="evidence" value="ECO:0000314"/>
    <property type="project" value="UniProtKB"/>
</dbReference>
<dbReference type="GO" id="GO:0070126">
    <property type="term" value="P:mitochondrial translational termination"/>
    <property type="evidence" value="ECO:0000314"/>
    <property type="project" value="UniProtKB"/>
</dbReference>
<dbReference type="FunFam" id="3.30.160.20:FF:000004">
    <property type="entry name" value="Peptide chain release factor 1"/>
    <property type="match status" value="1"/>
</dbReference>
<dbReference type="FunFam" id="3.30.70.1660:FF:000004">
    <property type="entry name" value="Peptide chain release factor 1"/>
    <property type="match status" value="1"/>
</dbReference>
<dbReference type="FunFam" id="3.30.70.1660:FF:000011">
    <property type="entry name" value="Peptide chain release factor 1-like, mitochondrial"/>
    <property type="match status" value="1"/>
</dbReference>
<dbReference type="Gene3D" id="3.30.160.20">
    <property type="match status" value="1"/>
</dbReference>
<dbReference type="Gene3D" id="3.30.70.1660">
    <property type="match status" value="1"/>
</dbReference>
<dbReference type="Gene3D" id="6.10.140.1950">
    <property type="match status" value="1"/>
</dbReference>
<dbReference type="InterPro" id="IPR005139">
    <property type="entry name" value="PCRF"/>
</dbReference>
<dbReference type="InterPro" id="IPR000352">
    <property type="entry name" value="Pep_chain_release_fac_I"/>
</dbReference>
<dbReference type="InterPro" id="IPR045853">
    <property type="entry name" value="Pep_chain_release_fac_I_sf"/>
</dbReference>
<dbReference type="InterPro" id="IPR050057">
    <property type="entry name" value="Prokaryotic/Mito_RF"/>
</dbReference>
<dbReference type="NCBIfam" id="NF001859">
    <property type="entry name" value="PRK00591.1"/>
    <property type="match status" value="1"/>
</dbReference>
<dbReference type="PANTHER" id="PTHR43804">
    <property type="entry name" value="LD18447P"/>
    <property type="match status" value="1"/>
</dbReference>
<dbReference type="PANTHER" id="PTHR43804:SF3">
    <property type="entry name" value="PEPTIDE CHAIN RELEASE FACTOR 1-LIKE, MITOCHONDRIAL"/>
    <property type="match status" value="1"/>
</dbReference>
<dbReference type="Pfam" id="PF03462">
    <property type="entry name" value="PCRF"/>
    <property type="match status" value="1"/>
</dbReference>
<dbReference type="Pfam" id="PF00472">
    <property type="entry name" value="RF-1"/>
    <property type="match status" value="1"/>
</dbReference>
<dbReference type="SMART" id="SM00937">
    <property type="entry name" value="PCRF"/>
    <property type="match status" value="1"/>
</dbReference>
<dbReference type="SUPFAM" id="SSF75620">
    <property type="entry name" value="Release factor"/>
    <property type="match status" value="1"/>
</dbReference>
<dbReference type="PROSITE" id="PS00745">
    <property type="entry name" value="RF_PROK_I"/>
    <property type="match status" value="1"/>
</dbReference>
<protein>
    <recommendedName>
        <fullName evidence="16">Peptide chain release factor 1-like, mitochondrial</fullName>
    </recommendedName>
    <alternativeName>
        <fullName>Mitochondrial translational release factor 1-like</fullName>
    </alternativeName>
    <alternativeName>
        <fullName evidence="14 15">mtRF1a</fullName>
    </alternativeName>
</protein>
<sequence length="380" mass="43600">MRSRVLWGAARWLWPRRAVGPARRPLSSGSPPLEELFTRGGPLRTFLERQAGSEAHLKVRRPELLAVIKLLNEKERELRETEHLLHDENEDLRKLAENEITLCQKEITQLKHQIILLLVPSEETDENDLILEVTAGVGGQEAMLFTSEIFDMYQQYAAFKRWHFETLEYFPSELGGLRHASASIGGSEAYRHMKFEGGVHRVQRVPKTEKQGRVHTSTMTVAILPQPTEINLVINPKDLRIDTKRASGAGGQHVNTTDSAVRIVHLPTGVVSECQQERSQLKNKELAMTKLRAKLYSMHLEEEINKRQNARKIQIGSKGRSEKIRTYNFPQNRVTDHRINKTLHDLETFMQGDYLLDELVQSLKEYADYESLVEIISQKV</sequence>
<evidence type="ECO:0000250" key="1">
    <source>
        <dbReference type="UniProtKB" id="Q80VP5"/>
    </source>
</evidence>
<evidence type="ECO:0000250" key="2">
    <source>
        <dbReference type="UniProtKB" id="Q9H3J6"/>
    </source>
</evidence>
<evidence type="ECO:0000255" key="3"/>
<evidence type="ECO:0000269" key="4">
    <source>
    </source>
</evidence>
<evidence type="ECO:0000269" key="5">
    <source>
    </source>
</evidence>
<evidence type="ECO:0000269" key="6">
    <source>
    </source>
</evidence>
<evidence type="ECO:0000269" key="7">
    <source>
    </source>
</evidence>
<evidence type="ECO:0000269" key="8">
    <source>
    </source>
</evidence>
<evidence type="ECO:0000269" key="9">
    <source>
    </source>
</evidence>
<evidence type="ECO:0000269" key="10">
    <source>
    </source>
</evidence>
<evidence type="ECO:0000269" key="11">
    <source ref="3"/>
</evidence>
<evidence type="ECO:0000303" key="12">
    <source>
    </source>
</evidence>
<evidence type="ECO:0000303" key="13">
    <source>
    </source>
</evidence>
<evidence type="ECO:0000303" key="14">
    <source>
    </source>
</evidence>
<evidence type="ECO:0000303" key="15">
    <source>
    </source>
</evidence>
<evidence type="ECO:0000305" key="16"/>
<evidence type="ECO:0000312" key="17">
    <source>
        <dbReference type="HGNC" id="HGNC:21051"/>
    </source>
</evidence>
<evidence type="ECO:0007744" key="18">
    <source>
        <dbReference type="PDB" id="7NQH"/>
    </source>
</evidence>
<gene>
    <name evidence="17" type="primary">MTRF1L</name>
    <name evidence="14 15" type="synonym">MTRF1A</name>
</gene>
<accession>Q9UGC7</accession>
<accession>B3KTA0</accession>
<accession>Q3KR06</accession>
<accession>Q5TF44</accession>
<accession>Q5TF50</accession>
<accession>Q96CC5</accession>
<accession>Q96EX4</accession>
<accession>Q96K40</accession>
<reference key="1">
    <citation type="journal article" date="2004" name="Nat. Genet.">
        <title>Complete sequencing and characterization of 21,243 full-length human cDNAs.</title>
        <authorList>
            <person name="Ota T."/>
            <person name="Suzuki Y."/>
            <person name="Nishikawa T."/>
            <person name="Otsuki T."/>
            <person name="Sugiyama T."/>
            <person name="Irie R."/>
            <person name="Wakamatsu A."/>
            <person name="Hayashi K."/>
            <person name="Sato H."/>
            <person name="Nagai K."/>
            <person name="Kimura K."/>
            <person name="Makita H."/>
            <person name="Sekine M."/>
            <person name="Obayashi M."/>
            <person name="Nishi T."/>
            <person name="Shibahara T."/>
            <person name="Tanaka T."/>
            <person name="Ishii S."/>
            <person name="Yamamoto J."/>
            <person name="Saito K."/>
            <person name="Kawai Y."/>
            <person name="Isono Y."/>
            <person name="Nakamura Y."/>
            <person name="Nagahari K."/>
            <person name="Murakami K."/>
            <person name="Yasuda T."/>
            <person name="Iwayanagi T."/>
            <person name="Wagatsuma M."/>
            <person name="Shiratori A."/>
            <person name="Sudo H."/>
            <person name="Hosoiri T."/>
            <person name="Kaku Y."/>
            <person name="Kodaira H."/>
            <person name="Kondo H."/>
            <person name="Sugawara M."/>
            <person name="Takahashi M."/>
            <person name="Kanda K."/>
            <person name="Yokoi T."/>
            <person name="Furuya T."/>
            <person name="Kikkawa E."/>
            <person name="Omura Y."/>
            <person name="Abe K."/>
            <person name="Kamihara K."/>
            <person name="Katsuta N."/>
            <person name="Sato K."/>
            <person name="Tanikawa M."/>
            <person name="Yamazaki M."/>
            <person name="Ninomiya K."/>
            <person name="Ishibashi T."/>
            <person name="Yamashita H."/>
            <person name="Murakawa K."/>
            <person name="Fujimori K."/>
            <person name="Tanai H."/>
            <person name="Kimata M."/>
            <person name="Watanabe M."/>
            <person name="Hiraoka S."/>
            <person name="Chiba Y."/>
            <person name="Ishida S."/>
            <person name="Ono Y."/>
            <person name="Takiguchi S."/>
            <person name="Watanabe S."/>
            <person name="Yosida M."/>
            <person name="Hotuta T."/>
            <person name="Kusano J."/>
            <person name="Kanehori K."/>
            <person name="Takahashi-Fujii A."/>
            <person name="Hara H."/>
            <person name="Tanase T.-O."/>
            <person name="Nomura Y."/>
            <person name="Togiya S."/>
            <person name="Komai F."/>
            <person name="Hara R."/>
            <person name="Takeuchi K."/>
            <person name="Arita M."/>
            <person name="Imose N."/>
            <person name="Musashino K."/>
            <person name="Yuuki H."/>
            <person name="Oshima A."/>
            <person name="Sasaki N."/>
            <person name="Aotsuka S."/>
            <person name="Yoshikawa Y."/>
            <person name="Matsunawa H."/>
            <person name="Ichihara T."/>
            <person name="Shiohata N."/>
            <person name="Sano S."/>
            <person name="Moriya S."/>
            <person name="Momiyama H."/>
            <person name="Satoh N."/>
            <person name="Takami S."/>
            <person name="Terashima Y."/>
            <person name="Suzuki O."/>
            <person name="Nakagawa S."/>
            <person name="Senoh A."/>
            <person name="Mizoguchi H."/>
            <person name="Goto Y."/>
            <person name="Shimizu F."/>
            <person name="Wakebe H."/>
            <person name="Hishigaki H."/>
            <person name="Watanabe T."/>
            <person name="Sugiyama A."/>
            <person name="Takemoto M."/>
            <person name="Kawakami B."/>
            <person name="Yamazaki M."/>
            <person name="Watanabe K."/>
            <person name="Kumagai A."/>
            <person name="Itakura S."/>
            <person name="Fukuzumi Y."/>
            <person name="Fujimori Y."/>
            <person name="Komiyama M."/>
            <person name="Tashiro H."/>
            <person name="Tanigami A."/>
            <person name="Fujiwara T."/>
            <person name="Ono T."/>
            <person name="Yamada K."/>
            <person name="Fujii Y."/>
            <person name="Ozaki K."/>
            <person name="Hirao M."/>
            <person name="Ohmori Y."/>
            <person name="Kawabata A."/>
            <person name="Hikiji T."/>
            <person name="Kobatake N."/>
            <person name="Inagaki H."/>
            <person name="Ikema Y."/>
            <person name="Okamoto S."/>
            <person name="Okitani R."/>
            <person name="Kawakami T."/>
            <person name="Noguchi S."/>
            <person name="Itoh T."/>
            <person name="Shigeta K."/>
            <person name="Senba T."/>
            <person name="Matsumura K."/>
            <person name="Nakajima Y."/>
            <person name="Mizuno T."/>
            <person name="Morinaga M."/>
            <person name="Sasaki M."/>
            <person name="Togashi T."/>
            <person name="Oyama M."/>
            <person name="Hata H."/>
            <person name="Watanabe M."/>
            <person name="Komatsu T."/>
            <person name="Mizushima-Sugano J."/>
            <person name="Satoh T."/>
            <person name="Shirai Y."/>
            <person name="Takahashi Y."/>
            <person name="Nakagawa K."/>
            <person name="Okumura K."/>
            <person name="Nagase T."/>
            <person name="Nomura N."/>
            <person name="Kikuchi H."/>
            <person name="Masuho Y."/>
            <person name="Yamashita R."/>
            <person name="Nakai K."/>
            <person name="Yada T."/>
            <person name="Nakamura Y."/>
            <person name="Ohara O."/>
            <person name="Isogai T."/>
            <person name="Sugano S."/>
        </authorList>
    </citation>
    <scope>NUCLEOTIDE SEQUENCE [LARGE SCALE MRNA] (ISOFORMS 1; 2 AND 3)</scope>
    <source>
        <tissue>Tongue</tissue>
    </source>
</reference>
<reference key="2">
    <citation type="journal article" date="2003" name="Nature">
        <title>The DNA sequence and analysis of human chromosome 6.</title>
        <authorList>
            <person name="Mungall A.J."/>
            <person name="Palmer S.A."/>
            <person name="Sims S.K."/>
            <person name="Edwards C.A."/>
            <person name="Ashurst J.L."/>
            <person name="Wilming L."/>
            <person name="Jones M.C."/>
            <person name="Horton R."/>
            <person name="Hunt S.E."/>
            <person name="Scott C.E."/>
            <person name="Gilbert J.G.R."/>
            <person name="Clamp M.E."/>
            <person name="Bethel G."/>
            <person name="Milne S."/>
            <person name="Ainscough R."/>
            <person name="Almeida J.P."/>
            <person name="Ambrose K.D."/>
            <person name="Andrews T.D."/>
            <person name="Ashwell R.I.S."/>
            <person name="Babbage A.K."/>
            <person name="Bagguley C.L."/>
            <person name="Bailey J."/>
            <person name="Banerjee R."/>
            <person name="Barker D.J."/>
            <person name="Barlow K.F."/>
            <person name="Bates K."/>
            <person name="Beare D.M."/>
            <person name="Beasley H."/>
            <person name="Beasley O."/>
            <person name="Bird C.P."/>
            <person name="Blakey S.E."/>
            <person name="Bray-Allen S."/>
            <person name="Brook J."/>
            <person name="Brown A.J."/>
            <person name="Brown J.Y."/>
            <person name="Burford D.C."/>
            <person name="Burrill W."/>
            <person name="Burton J."/>
            <person name="Carder C."/>
            <person name="Carter N.P."/>
            <person name="Chapman J.C."/>
            <person name="Clark S.Y."/>
            <person name="Clark G."/>
            <person name="Clee C.M."/>
            <person name="Clegg S."/>
            <person name="Cobley V."/>
            <person name="Collier R.E."/>
            <person name="Collins J.E."/>
            <person name="Colman L.K."/>
            <person name="Corby N.R."/>
            <person name="Coville G.J."/>
            <person name="Culley K.M."/>
            <person name="Dhami P."/>
            <person name="Davies J."/>
            <person name="Dunn M."/>
            <person name="Earthrowl M.E."/>
            <person name="Ellington A.E."/>
            <person name="Evans K.A."/>
            <person name="Faulkner L."/>
            <person name="Francis M.D."/>
            <person name="Frankish A."/>
            <person name="Frankland J."/>
            <person name="French L."/>
            <person name="Garner P."/>
            <person name="Garnett J."/>
            <person name="Ghori M.J."/>
            <person name="Gilby L.M."/>
            <person name="Gillson C.J."/>
            <person name="Glithero R.J."/>
            <person name="Grafham D.V."/>
            <person name="Grant M."/>
            <person name="Gribble S."/>
            <person name="Griffiths C."/>
            <person name="Griffiths M.N.D."/>
            <person name="Hall R."/>
            <person name="Halls K.S."/>
            <person name="Hammond S."/>
            <person name="Harley J.L."/>
            <person name="Hart E.A."/>
            <person name="Heath P.D."/>
            <person name="Heathcott R."/>
            <person name="Holmes S.J."/>
            <person name="Howden P.J."/>
            <person name="Howe K.L."/>
            <person name="Howell G.R."/>
            <person name="Huckle E."/>
            <person name="Humphray S.J."/>
            <person name="Humphries M.D."/>
            <person name="Hunt A.R."/>
            <person name="Johnson C.M."/>
            <person name="Joy A.A."/>
            <person name="Kay M."/>
            <person name="Keenan S.J."/>
            <person name="Kimberley A.M."/>
            <person name="King A."/>
            <person name="Laird G.K."/>
            <person name="Langford C."/>
            <person name="Lawlor S."/>
            <person name="Leongamornlert D.A."/>
            <person name="Leversha M."/>
            <person name="Lloyd C.R."/>
            <person name="Lloyd D.M."/>
            <person name="Loveland J.E."/>
            <person name="Lovell J."/>
            <person name="Martin S."/>
            <person name="Mashreghi-Mohammadi M."/>
            <person name="Maslen G.L."/>
            <person name="Matthews L."/>
            <person name="McCann O.T."/>
            <person name="McLaren S.J."/>
            <person name="McLay K."/>
            <person name="McMurray A."/>
            <person name="Moore M.J.F."/>
            <person name="Mullikin J.C."/>
            <person name="Niblett D."/>
            <person name="Nickerson T."/>
            <person name="Novik K.L."/>
            <person name="Oliver K."/>
            <person name="Overton-Larty E.K."/>
            <person name="Parker A."/>
            <person name="Patel R."/>
            <person name="Pearce A.V."/>
            <person name="Peck A.I."/>
            <person name="Phillimore B.J.C.T."/>
            <person name="Phillips S."/>
            <person name="Plumb R.W."/>
            <person name="Porter K.M."/>
            <person name="Ramsey Y."/>
            <person name="Ranby S.A."/>
            <person name="Rice C.M."/>
            <person name="Ross M.T."/>
            <person name="Searle S.M."/>
            <person name="Sehra H.K."/>
            <person name="Sheridan E."/>
            <person name="Skuce C.D."/>
            <person name="Smith S."/>
            <person name="Smith M."/>
            <person name="Spraggon L."/>
            <person name="Squares S.L."/>
            <person name="Steward C.A."/>
            <person name="Sycamore N."/>
            <person name="Tamlyn-Hall G."/>
            <person name="Tester J."/>
            <person name="Theaker A.J."/>
            <person name="Thomas D.W."/>
            <person name="Thorpe A."/>
            <person name="Tracey A."/>
            <person name="Tromans A."/>
            <person name="Tubby B."/>
            <person name="Wall M."/>
            <person name="Wallis J.M."/>
            <person name="West A.P."/>
            <person name="White S.S."/>
            <person name="Whitehead S.L."/>
            <person name="Whittaker H."/>
            <person name="Wild A."/>
            <person name="Willey D.J."/>
            <person name="Wilmer T.E."/>
            <person name="Wood J.M."/>
            <person name="Wray P.W."/>
            <person name="Wyatt J.C."/>
            <person name="Young L."/>
            <person name="Younger R.M."/>
            <person name="Bentley D.R."/>
            <person name="Coulson A."/>
            <person name="Durbin R.M."/>
            <person name="Hubbard T."/>
            <person name="Sulston J.E."/>
            <person name="Dunham I."/>
            <person name="Rogers J."/>
            <person name="Beck S."/>
        </authorList>
    </citation>
    <scope>NUCLEOTIDE SEQUENCE [LARGE SCALE GENOMIC DNA]</scope>
</reference>
<reference key="3">
    <citation type="submission" date="2005-09" db="EMBL/GenBank/DDBJ databases">
        <authorList>
            <person name="Mural R.J."/>
            <person name="Istrail S."/>
            <person name="Sutton G.G."/>
            <person name="Florea L."/>
            <person name="Halpern A.L."/>
            <person name="Mobarry C.M."/>
            <person name="Lippert R."/>
            <person name="Walenz B."/>
            <person name="Shatkay H."/>
            <person name="Dew I."/>
            <person name="Miller J.R."/>
            <person name="Flanigan M.J."/>
            <person name="Edwards N.J."/>
            <person name="Bolanos R."/>
            <person name="Fasulo D."/>
            <person name="Halldorsson B.V."/>
            <person name="Hannenhalli S."/>
            <person name="Turner R."/>
            <person name="Yooseph S."/>
            <person name="Lu F."/>
            <person name="Nusskern D.R."/>
            <person name="Shue B.C."/>
            <person name="Zheng X.H."/>
            <person name="Zhong F."/>
            <person name="Delcher A.L."/>
            <person name="Huson D.H."/>
            <person name="Kravitz S.A."/>
            <person name="Mouchard L."/>
            <person name="Reinert K."/>
            <person name="Remington K.A."/>
            <person name="Clark A.G."/>
            <person name="Waterman M.S."/>
            <person name="Eichler E.E."/>
            <person name="Adams M.D."/>
            <person name="Hunkapiller M.W."/>
            <person name="Myers E.W."/>
            <person name="Venter J.C."/>
        </authorList>
    </citation>
    <scope>NUCLEOTIDE SEQUENCE [LARGE SCALE GENOMIC DNA]</scope>
    <scope>VARIANTS ALA-38 AND GLN-76</scope>
</reference>
<reference key="4">
    <citation type="journal article" date="2004" name="Genome Res.">
        <title>The status, quality, and expansion of the NIH full-length cDNA project: the Mammalian Gene Collection (MGC).</title>
        <authorList>
            <consortium name="The MGC Project Team"/>
        </authorList>
    </citation>
    <scope>NUCLEOTIDE SEQUENCE [LARGE SCALE MRNA] (ISOFORMS 1; 2 AND 4)</scope>
    <scope>VARIANTS ALA-38 AND GLN-76</scope>
    <source>
        <tissue>Eye</tissue>
        <tissue>Muscle</tissue>
        <tissue>Skin</tissue>
    </source>
</reference>
<reference key="5">
    <citation type="journal article" date="2007" name="Mol. Cell">
        <title>mtRF1a is a human mitochondrial translation release factor decoding the major termination codons UAA and UAG.</title>
        <authorList>
            <person name="Soleimanpour-Lichaei H.R."/>
            <person name="Kuehl I."/>
            <person name="Gaisne M."/>
            <person name="Passos J.F."/>
            <person name="Wydro M."/>
            <person name="Rorbach J."/>
            <person name="Temperley R."/>
            <person name="Bonnefoy N."/>
            <person name="Tate W."/>
            <person name="Lightowlers R."/>
            <person name="Chrzanowska-Lightowlers Z."/>
        </authorList>
    </citation>
    <scope>FUNCTION</scope>
    <scope>TISSUE SPECIFICITY</scope>
    <scope>SUBCELLULAR LOCATION</scope>
</reference>
<reference key="6">
    <citation type="journal article" date="2008" name="Biochem. Biophys. Res. Commun.">
        <title>The human mitochondrial translation release factor HMRF1L is methylated in the GGQ motif by the methyltransferase HMPrmC.</title>
        <authorList>
            <person name="Ishizawa T."/>
            <person name="Nozaki Y."/>
            <person name="Ueda T."/>
            <person name="Takeuchi N."/>
        </authorList>
    </citation>
    <scope>METHYLATION AT GLN-252 BY HEMK1</scope>
</reference>
<reference key="7">
    <citation type="journal article" date="2010" name="Science">
        <title>Hungry codons promote frameshifting in human mitochondrial ribosomes.</title>
        <authorList>
            <person name="Temperley R."/>
            <person name="Richter R."/>
            <person name="Dennerlein S."/>
            <person name="Lightowlers R.N."/>
            <person name="Chrzanowska-Lightowlers Z.M."/>
        </authorList>
    </citation>
    <scope>FUNCTION</scope>
</reference>
<reference key="8">
    <citation type="journal article" date="2022" name="Sci. Rep.">
        <title>Mammalian HEMK1 methylates glutamine residue of the GGQ motif of mitochondrial release factors.</title>
        <authorList>
            <person name="Fang Q."/>
            <person name="Kimura Y."/>
            <person name="Shimazu T."/>
            <person name="Suzuki T."/>
            <person name="Yamada A."/>
            <person name="Dohmae N."/>
            <person name="Iwasaki S."/>
            <person name="Shinkai Y."/>
        </authorList>
    </citation>
    <scope>METHYLATION AT GLN-252</scope>
</reference>
<reference key="9">
    <citation type="journal article" date="2023" name="Science">
        <title>Molecular basis of translation termination at noncanonical stop codons in human mitochondria.</title>
        <authorList>
            <person name="Saurer M."/>
            <person name="Leibundgut M."/>
            <person name="Nadimpalli H.P."/>
            <person name="Scaiola A."/>
            <person name="Schoenhut T."/>
            <person name="Lee R.G."/>
            <person name="Siira S.J."/>
            <person name="Rackham O."/>
            <person name="Dreos R."/>
            <person name="Lenarcic T."/>
            <person name="Kummer E."/>
            <person name="Gatfield D."/>
            <person name="Filipovska A."/>
            <person name="Ban N."/>
        </authorList>
    </citation>
    <scope>FUNCTION</scope>
    <scope>MUTAGENESIS OF 250-GLY-GLY-251</scope>
</reference>
<reference evidence="18" key="10">
    <citation type="journal article" date="2021" name="Mol. Cell">
        <title>Structural basis of translation termination, rescue, and recycling in mammalian mitochondria.</title>
        <authorList>
            <person name="Kummer E."/>
            <person name="Schubert K.N."/>
            <person name="Schoenhut T."/>
            <person name="Scaiola A."/>
            <person name="Ban N."/>
        </authorList>
    </citation>
    <scope>STRUCTURE BY ELECTRON MICROSCOPY (3.50 ANGSTROMS) OF 20-380 IN COMPLEX WITH MITOCHONDRIAL RIBOSOME</scope>
    <scope>FUNCTION</scope>
</reference>
<organism>
    <name type="scientific">Homo sapiens</name>
    <name type="common">Human</name>
    <dbReference type="NCBI Taxonomy" id="9606"/>
    <lineage>
        <taxon>Eukaryota</taxon>
        <taxon>Metazoa</taxon>
        <taxon>Chordata</taxon>
        <taxon>Craniata</taxon>
        <taxon>Vertebrata</taxon>
        <taxon>Euteleostomi</taxon>
        <taxon>Mammalia</taxon>
        <taxon>Eutheria</taxon>
        <taxon>Euarchontoglires</taxon>
        <taxon>Primates</taxon>
        <taxon>Haplorrhini</taxon>
        <taxon>Catarrhini</taxon>
        <taxon>Hominidae</taxon>
        <taxon>Homo</taxon>
    </lineage>
</organism>
<keyword id="KW-0002">3D-structure</keyword>
<keyword id="KW-0025">Alternative splicing</keyword>
<keyword id="KW-0175">Coiled coil</keyword>
<keyword id="KW-0488">Methylation</keyword>
<keyword id="KW-0496">Mitochondrion</keyword>
<keyword id="KW-0648">Protein biosynthesis</keyword>
<keyword id="KW-1267">Proteomics identification</keyword>
<keyword id="KW-1185">Reference proteome</keyword>
<keyword id="KW-0809">Transit peptide</keyword>
<feature type="transit peptide" description="Mitochondrion" evidence="3">
    <location>
        <begin position="1"/>
        <end position="26"/>
    </location>
</feature>
<feature type="chain" id="PRO_0000330944" description="Peptide chain release factor 1-like, mitochondrial">
    <location>
        <begin position="27"/>
        <end position="380"/>
    </location>
</feature>
<feature type="region of interest" description="GGQ domain" evidence="1">
    <location>
        <begin position="236"/>
        <end position="300"/>
    </location>
</feature>
<feature type="coiled-coil region" evidence="3">
    <location>
        <begin position="63"/>
        <end position="117"/>
    </location>
</feature>
<feature type="short sequence motif" description="GGQ" evidence="10">
    <location>
        <begin position="250"/>
        <end position="252"/>
    </location>
</feature>
<feature type="modified residue" description="N5-methylglutamine" evidence="6 9">
    <location>
        <position position="252"/>
    </location>
</feature>
<feature type="splice variant" id="VSP_033139" description="In isoform 3." evidence="12">
    <location>
        <begin position="1"/>
        <end position="142"/>
    </location>
</feature>
<feature type="splice variant" id="VSP_033140" description="In isoform 4." evidence="13">
    <location>
        <begin position="139"/>
        <end position="174"/>
    </location>
</feature>
<feature type="splice variant" id="VSP_033141" description="In isoform 2 and isoform 4." evidence="12 13">
    <original>GVV</original>
    <variation>DWK</variation>
    <location>
        <begin position="269"/>
        <end position="271"/>
    </location>
</feature>
<feature type="splice variant" id="VSP_033142" description="In isoform 2 and isoform 4." evidence="12 13">
    <location>
        <begin position="272"/>
        <end position="380"/>
    </location>
</feature>
<feature type="sequence variant" id="VAR_042725" description="In dbSNP:rs3818125." evidence="4 11">
    <original>T</original>
    <variation>A</variation>
    <location>
        <position position="38"/>
    </location>
</feature>
<feature type="sequence variant" id="VAR_042726" description="In dbSNP:rs3818123." evidence="4 11">
    <original>R</original>
    <variation>Q</variation>
    <location>
        <position position="76"/>
    </location>
</feature>
<feature type="sequence variant" id="VAR_042727" description="In dbSNP:rs12660881.">
    <original>L</original>
    <variation>F</variation>
    <location>
        <position position="177"/>
    </location>
</feature>
<feature type="sequence variant" id="VAR_042728" description="In dbSNP:rs3192723.">
    <original>V</original>
    <variation>I</variation>
    <location>
        <position position="214"/>
    </location>
</feature>
<feature type="mutagenesis site" description="Impaired mitochondrial peptide chain release factor activity." evidence="10">
    <original>GG</original>
    <variation>AA</variation>
    <location>
        <begin position="250"/>
        <end position="251"/>
    </location>
</feature>
<comment type="function">
    <text evidence="5 8 10">Mitochondrial peptide chain release factor that directs the termination of translation in response to the peptide chain termination codons UAA and UAG.</text>
</comment>
<comment type="subcellular location">
    <subcellularLocation>
        <location evidence="5">Mitochondrion</location>
    </subcellularLocation>
</comment>
<comment type="alternative products">
    <event type="alternative splicing"/>
    <isoform>
        <id>Q9UGC7-1</id>
        <name>1</name>
        <sequence type="displayed"/>
    </isoform>
    <isoform>
        <id>Q9UGC7-2</id>
        <name>2</name>
        <sequence type="described" ref="VSP_033141 VSP_033142"/>
    </isoform>
    <isoform>
        <id>Q9UGC7-3</id>
        <name>3</name>
        <sequence type="described" ref="VSP_033139"/>
    </isoform>
    <isoform>
        <id>Q9UGC7-4</id>
        <name>4</name>
        <sequence type="described" ref="VSP_033140 VSP_033141 VSP_033142"/>
    </isoform>
</comment>
<comment type="tissue specificity">
    <text evidence="5">Expressed in skeletal muscle (at protein level).</text>
</comment>
<comment type="domain">
    <text evidence="2">The GGQ domain interacts with the peptidyltransferase center (PTC) of the large ribosomal subunit to trigger nascent chain hydrolysis.</text>
</comment>
<comment type="PTM">
    <text evidence="6 9">Methylation of glutamine in the GGQ triplet by HEMK1 is conserved from bacteria to mammals.</text>
</comment>
<comment type="similarity">
    <text evidence="16">Belongs to the prokaryotic/mitochondrial release factor family.</text>
</comment>
<comment type="caution">
    <text evidence="7 10">Was initially thought to promote the termination of non-canonical termination stop codons AGG and AGA in addition to canonical termination codons UAA and UAG (PubMed:20075246). However, it was later shown that termination of non-canonical termination stop codons AGG and AGA is mediated by MTRF1 (PubMed:37141370).</text>
</comment>
<proteinExistence type="evidence at protein level"/>